<evidence type="ECO:0000255" key="1">
    <source>
        <dbReference type="HAMAP-Rule" id="MF_01411"/>
    </source>
</evidence>
<evidence type="ECO:0000256" key="2">
    <source>
        <dbReference type="SAM" id="MobiDB-lite"/>
    </source>
</evidence>
<name>LPTD_ECTM1</name>
<accession>A4XZJ1</accession>
<dbReference type="EMBL" id="CP000680">
    <property type="protein sequence ID" value="ABP86757.1"/>
    <property type="molecule type" value="Genomic_DNA"/>
</dbReference>
<dbReference type="SMR" id="A4XZJ1"/>
<dbReference type="STRING" id="399739.Pmen_4010"/>
<dbReference type="KEGG" id="pmy:Pmen_4010"/>
<dbReference type="PATRIC" id="fig|399739.8.peg.4062"/>
<dbReference type="eggNOG" id="COG1452">
    <property type="taxonomic scope" value="Bacteria"/>
</dbReference>
<dbReference type="HOGENOM" id="CLU_009039_1_0_6"/>
<dbReference type="OrthoDB" id="9760225at2"/>
<dbReference type="GO" id="GO:0009279">
    <property type="term" value="C:cell outer membrane"/>
    <property type="evidence" value="ECO:0007669"/>
    <property type="project" value="UniProtKB-SubCell"/>
</dbReference>
<dbReference type="GO" id="GO:1990351">
    <property type="term" value="C:transporter complex"/>
    <property type="evidence" value="ECO:0007669"/>
    <property type="project" value="TreeGrafter"/>
</dbReference>
<dbReference type="GO" id="GO:0043165">
    <property type="term" value="P:Gram-negative-bacterium-type cell outer membrane assembly"/>
    <property type="evidence" value="ECO:0007669"/>
    <property type="project" value="UniProtKB-UniRule"/>
</dbReference>
<dbReference type="GO" id="GO:0015920">
    <property type="term" value="P:lipopolysaccharide transport"/>
    <property type="evidence" value="ECO:0007669"/>
    <property type="project" value="InterPro"/>
</dbReference>
<dbReference type="Gene3D" id="2.60.450.10">
    <property type="entry name" value="Lipopolysaccharide (LPS) transport protein A like domain"/>
    <property type="match status" value="1"/>
</dbReference>
<dbReference type="HAMAP" id="MF_01411">
    <property type="entry name" value="LPS_assembly_LptD"/>
    <property type="match status" value="1"/>
</dbReference>
<dbReference type="InterPro" id="IPR020889">
    <property type="entry name" value="LipoPS_assembly_LptD"/>
</dbReference>
<dbReference type="InterPro" id="IPR050218">
    <property type="entry name" value="LptD"/>
</dbReference>
<dbReference type="InterPro" id="IPR007543">
    <property type="entry name" value="LptD_C"/>
</dbReference>
<dbReference type="InterPro" id="IPR005653">
    <property type="entry name" value="OstA-like_N"/>
</dbReference>
<dbReference type="PANTHER" id="PTHR30189">
    <property type="entry name" value="LPS-ASSEMBLY PROTEIN"/>
    <property type="match status" value="1"/>
</dbReference>
<dbReference type="PANTHER" id="PTHR30189:SF1">
    <property type="entry name" value="LPS-ASSEMBLY PROTEIN LPTD"/>
    <property type="match status" value="1"/>
</dbReference>
<dbReference type="Pfam" id="PF04453">
    <property type="entry name" value="LptD"/>
    <property type="match status" value="1"/>
</dbReference>
<dbReference type="Pfam" id="PF03968">
    <property type="entry name" value="LptD_N"/>
    <property type="match status" value="1"/>
</dbReference>
<organism>
    <name type="scientific">Ectopseudomonas mendocina (strain ymp)</name>
    <name type="common">Pseudomonas mendocina</name>
    <dbReference type="NCBI Taxonomy" id="399739"/>
    <lineage>
        <taxon>Bacteria</taxon>
        <taxon>Pseudomonadati</taxon>
        <taxon>Pseudomonadota</taxon>
        <taxon>Gammaproteobacteria</taxon>
        <taxon>Pseudomonadales</taxon>
        <taxon>Pseudomonadaceae</taxon>
        <taxon>Ectopseudomonas</taxon>
    </lineage>
</organism>
<gene>
    <name evidence="1" type="primary">lptD</name>
    <name type="synonym">imp</name>
    <name type="synonym">ostA</name>
    <name type="ordered locus">Pmen_4010</name>
</gene>
<reference key="1">
    <citation type="submission" date="2007-04" db="EMBL/GenBank/DDBJ databases">
        <title>Complete sequence of Pseudomonas mendocina ymp.</title>
        <authorList>
            <consortium name="US DOE Joint Genome Institute"/>
            <person name="Copeland A."/>
            <person name="Lucas S."/>
            <person name="Lapidus A."/>
            <person name="Barry K."/>
            <person name="Glavina del Rio T."/>
            <person name="Dalin E."/>
            <person name="Tice H."/>
            <person name="Pitluck S."/>
            <person name="Kiss H."/>
            <person name="Brettin T."/>
            <person name="Detter J.C."/>
            <person name="Bruce D."/>
            <person name="Han C."/>
            <person name="Schmutz J."/>
            <person name="Larimer F."/>
            <person name="Land M."/>
            <person name="Hauser L."/>
            <person name="Kyrpides N."/>
            <person name="Mikhailova N."/>
            <person name="Hersman L."/>
            <person name="Dubois J."/>
            <person name="Maurice P."/>
            <person name="Richardson P."/>
        </authorList>
    </citation>
    <scope>NUCLEOTIDE SEQUENCE [LARGE SCALE GENOMIC DNA]</scope>
    <source>
        <strain>ymp</strain>
    </source>
</reference>
<sequence length="938" mass="106652">MAVKHPAFRKKFPLLVTGSLLALQPAFSLQSFAAEQYDCQASPTGGWACAPKTATSALPPRPQHSRSAVSTTSGSATATATKQEPAPVLVTESKGRALASRSPDYSHLDWVPRDKLTAAQLAEAGPYCAGAYIEPLRPGMDDTTPLDESPMYVSAKASRYEQEKQIATLAGDVVLRQSGMQVEADEASLHQAENRGELVGNVRLRDKGTLVVGDRAELQLDNGEARIDNAEYVMHQAHVRGSALYAKREETAIIRLKDGTYTRCEPGDNAWHLKGNNVTLNPATGFGTATNVTLRVKDIPVFYTPYIYFPIDDRRQSGFLPPSLGTSSSNGFSLQTPYYFNLAPNYDATLYPTYMAKRGLLMEGEFRYLTESSEGQVGGAWLNDQEDERKLQSEYEDQRWMYSWQHKQGLNSRLLAEVDYTDISDPYYFQDLDTDLGIETQSYVNQRGTLTYRGDSYTARLNVHAYELANITDITPYDRLPQITLDGKLPFNPGGLDFTYGTEYVRFDRNLRSGFFVDKDGVTGRPQDLWYDARLTGLNRADGERLHLEPGVSLPLNWSWGFVKPQVKYLHTQYQVNLDGQGKADLATNDPENQWFGVDYKGSPNRGVGLFSLDSGLYFDRNTQLFGRETRQTLEPRAFYLYVPEEDQTDIPIFDTGEPTFSYASLWRENRFSGKDRIGDENKLSLGVTSRWIEPNGFERQRFSVGQAFYFEDRKVQLAGIDYRGRQDATSDVSPYALEYLYRFNRDWRFSSTFNWDPDQHATRSGSAMFHYQPEDNPNKIVNLGYRYRNDIVRYDRDSGTWTTNPDYGNPTLADGSPNPNYIKNYYKIDQHDFSVIWPLAPQWSLISRWQYDYGRNRTLEAFGGFEYDSCCWKLRLINRYWIDYDEVSLDPSRNDEPDRGIFLQIVLKGLGGVVGNKVETFLDQGIQGYREREDQAF</sequence>
<proteinExistence type="inferred from homology"/>
<feature type="signal peptide" evidence="1">
    <location>
        <begin position="1"/>
        <end position="33"/>
    </location>
</feature>
<feature type="chain" id="PRO_5000240920" description="LPS-assembly protein LptD">
    <location>
        <begin position="34"/>
        <end position="938"/>
    </location>
</feature>
<feature type="region of interest" description="Disordered" evidence="2">
    <location>
        <begin position="52"/>
        <end position="96"/>
    </location>
</feature>
<feature type="compositionally biased region" description="Low complexity" evidence="2">
    <location>
        <begin position="65"/>
        <end position="81"/>
    </location>
</feature>
<protein>
    <recommendedName>
        <fullName evidence="1">LPS-assembly protein LptD</fullName>
    </recommendedName>
</protein>
<keyword id="KW-0998">Cell outer membrane</keyword>
<keyword id="KW-0472">Membrane</keyword>
<keyword id="KW-0732">Signal</keyword>
<comment type="function">
    <text evidence="1">Together with LptE, is involved in the assembly of lipopolysaccharide (LPS) at the surface of the outer membrane.</text>
</comment>
<comment type="subunit">
    <text evidence="1">Component of the lipopolysaccharide transport and assembly complex. Interacts with LptE and LptA.</text>
</comment>
<comment type="subcellular location">
    <subcellularLocation>
        <location evidence="1">Cell outer membrane</location>
    </subcellularLocation>
</comment>
<comment type="similarity">
    <text evidence="1">Belongs to the LptD family.</text>
</comment>